<feature type="chain" id="PRO_1000114089" description="Aminomethyltransferase">
    <location>
        <begin position="1"/>
        <end position="370"/>
    </location>
</feature>
<organism>
    <name type="scientific">Clostridium botulinum (strain Okra / Type B1)</name>
    <dbReference type="NCBI Taxonomy" id="498213"/>
    <lineage>
        <taxon>Bacteria</taxon>
        <taxon>Bacillati</taxon>
        <taxon>Bacillota</taxon>
        <taxon>Clostridia</taxon>
        <taxon>Eubacteriales</taxon>
        <taxon>Clostridiaceae</taxon>
        <taxon>Clostridium</taxon>
    </lineage>
</organism>
<dbReference type="EC" id="2.1.2.10" evidence="1"/>
<dbReference type="EMBL" id="CP000939">
    <property type="protein sequence ID" value="ACA43829.1"/>
    <property type="molecule type" value="Genomic_DNA"/>
</dbReference>
<dbReference type="RefSeq" id="WP_003399546.1">
    <property type="nucleotide sequence ID" value="NC_010516.1"/>
</dbReference>
<dbReference type="SMR" id="B1IEV3"/>
<dbReference type="KEGG" id="cbb:CLD_0070"/>
<dbReference type="HOGENOM" id="CLU_007884_10_2_9"/>
<dbReference type="Proteomes" id="UP000008541">
    <property type="component" value="Chromosome"/>
</dbReference>
<dbReference type="GO" id="GO:0005829">
    <property type="term" value="C:cytosol"/>
    <property type="evidence" value="ECO:0007669"/>
    <property type="project" value="TreeGrafter"/>
</dbReference>
<dbReference type="GO" id="GO:0005960">
    <property type="term" value="C:glycine cleavage complex"/>
    <property type="evidence" value="ECO:0007669"/>
    <property type="project" value="InterPro"/>
</dbReference>
<dbReference type="GO" id="GO:0004047">
    <property type="term" value="F:aminomethyltransferase activity"/>
    <property type="evidence" value="ECO:0007669"/>
    <property type="project" value="UniProtKB-UniRule"/>
</dbReference>
<dbReference type="GO" id="GO:0008483">
    <property type="term" value="F:transaminase activity"/>
    <property type="evidence" value="ECO:0007669"/>
    <property type="project" value="UniProtKB-KW"/>
</dbReference>
<dbReference type="GO" id="GO:0019464">
    <property type="term" value="P:glycine decarboxylation via glycine cleavage system"/>
    <property type="evidence" value="ECO:0007669"/>
    <property type="project" value="UniProtKB-UniRule"/>
</dbReference>
<dbReference type="FunFam" id="2.40.30.110:FF:000014">
    <property type="entry name" value="Aminomethyltransferase"/>
    <property type="match status" value="1"/>
</dbReference>
<dbReference type="FunFam" id="3.30.70.1400:FF:000001">
    <property type="entry name" value="Aminomethyltransferase"/>
    <property type="match status" value="1"/>
</dbReference>
<dbReference type="FunFam" id="4.10.1250.10:FF:000001">
    <property type="entry name" value="Aminomethyltransferase"/>
    <property type="match status" value="1"/>
</dbReference>
<dbReference type="Gene3D" id="2.40.30.110">
    <property type="entry name" value="Aminomethyltransferase beta-barrel domains"/>
    <property type="match status" value="1"/>
</dbReference>
<dbReference type="Gene3D" id="3.30.70.1400">
    <property type="entry name" value="Aminomethyltransferase beta-barrel domains"/>
    <property type="match status" value="1"/>
</dbReference>
<dbReference type="Gene3D" id="4.10.1250.10">
    <property type="entry name" value="Aminomethyltransferase fragment"/>
    <property type="match status" value="1"/>
</dbReference>
<dbReference type="Gene3D" id="3.30.1360.120">
    <property type="entry name" value="Probable tRNA modification gtpase trme, domain 1"/>
    <property type="match status" value="1"/>
</dbReference>
<dbReference type="HAMAP" id="MF_00259">
    <property type="entry name" value="GcvT"/>
    <property type="match status" value="1"/>
</dbReference>
<dbReference type="InterPro" id="IPR006223">
    <property type="entry name" value="GCS_T"/>
</dbReference>
<dbReference type="InterPro" id="IPR022903">
    <property type="entry name" value="GCS_T_bac"/>
</dbReference>
<dbReference type="InterPro" id="IPR013977">
    <property type="entry name" value="GCST_C"/>
</dbReference>
<dbReference type="InterPro" id="IPR006222">
    <property type="entry name" value="GCV_T_N"/>
</dbReference>
<dbReference type="InterPro" id="IPR028896">
    <property type="entry name" value="GcvT/YgfZ/DmdA"/>
</dbReference>
<dbReference type="InterPro" id="IPR029043">
    <property type="entry name" value="GcvT/YgfZ_C"/>
</dbReference>
<dbReference type="InterPro" id="IPR027266">
    <property type="entry name" value="TrmE/GcvT_dom1"/>
</dbReference>
<dbReference type="NCBIfam" id="TIGR00528">
    <property type="entry name" value="gcvT"/>
    <property type="match status" value="1"/>
</dbReference>
<dbReference type="NCBIfam" id="NF001567">
    <property type="entry name" value="PRK00389.1"/>
    <property type="match status" value="1"/>
</dbReference>
<dbReference type="PANTHER" id="PTHR43757">
    <property type="entry name" value="AMINOMETHYLTRANSFERASE"/>
    <property type="match status" value="1"/>
</dbReference>
<dbReference type="PANTHER" id="PTHR43757:SF2">
    <property type="entry name" value="AMINOMETHYLTRANSFERASE, MITOCHONDRIAL"/>
    <property type="match status" value="1"/>
</dbReference>
<dbReference type="Pfam" id="PF01571">
    <property type="entry name" value="GCV_T"/>
    <property type="match status" value="1"/>
</dbReference>
<dbReference type="Pfam" id="PF08669">
    <property type="entry name" value="GCV_T_C"/>
    <property type="match status" value="1"/>
</dbReference>
<dbReference type="PIRSF" id="PIRSF006487">
    <property type="entry name" value="GcvT"/>
    <property type="match status" value="1"/>
</dbReference>
<dbReference type="SUPFAM" id="SSF101790">
    <property type="entry name" value="Aminomethyltransferase beta-barrel domain"/>
    <property type="match status" value="1"/>
</dbReference>
<dbReference type="SUPFAM" id="SSF103025">
    <property type="entry name" value="Folate-binding domain"/>
    <property type="match status" value="1"/>
</dbReference>
<accession>B1IEV3</accession>
<name>GCST_CLOBK</name>
<protein>
    <recommendedName>
        <fullName evidence="1">Aminomethyltransferase</fullName>
        <ecNumber evidence="1">2.1.2.10</ecNumber>
    </recommendedName>
    <alternativeName>
        <fullName evidence="1">Glycine cleavage system T protein</fullName>
    </alternativeName>
</protein>
<keyword id="KW-0032">Aminotransferase</keyword>
<keyword id="KW-0808">Transferase</keyword>
<gene>
    <name evidence="1" type="primary">gcvT</name>
    <name type="ordered locus">CLD_0070</name>
</gene>
<reference key="1">
    <citation type="journal article" date="2007" name="PLoS ONE">
        <title>Analysis of the neurotoxin complex genes in Clostridium botulinum A1-A4 and B1 strains: BoNT/A3, /Ba4 and /B1 clusters are located within plasmids.</title>
        <authorList>
            <person name="Smith T.J."/>
            <person name="Hill K.K."/>
            <person name="Foley B.T."/>
            <person name="Detter J.C."/>
            <person name="Munk A.C."/>
            <person name="Bruce D.C."/>
            <person name="Doggett N.A."/>
            <person name="Smith L.A."/>
            <person name="Marks J.D."/>
            <person name="Xie G."/>
            <person name="Brettin T.S."/>
        </authorList>
    </citation>
    <scope>NUCLEOTIDE SEQUENCE [LARGE SCALE GENOMIC DNA]</scope>
    <source>
        <strain>Okra / Type B1</strain>
    </source>
</reference>
<proteinExistence type="inferred from homology"/>
<evidence type="ECO:0000255" key="1">
    <source>
        <dbReference type="HAMAP-Rule" id="MF_00259"/>
    </source>
</evidence>
<sequence>MEDLKVTPLRGVYEEYGGKIVDFAGYELPTQFKGFLHEHHTVREKAGLFDVSHMGEVMVTGKDAGKFIQYLMTNDINILKDNEVLYTFMCNEDGGVIDDLLVYKFAENEFFLVINASNKDKDVKWIMDHKGDFDVEIVDESDSIAQLALQGPLAEEILQKIVDIDLQEIKFFKLKRDVLVNGKKCLVSRTGYTGEDGFEIYCKPEDAKGLWHAILNAGKEEGVQPIGLGARDTLRFEASLLLYGNEMDETITPLEVGMGFFVKLKVEEDFIGKDALIKQKAEGVTRKLVGFELLDKGIPRHGYEVIKDGKVIGHVTTGYKSPTLNKAIGLALVEEQYSKIGTEFNIKVRKKELKAVAIDKRFYTKKTKTK</sequence>
<comment type="function">
    <text evidence="1">The glycine cleavage system catalyzes the degradation of glycine.</text>
</comment>
<comment type="catalytic activity">
    <reaction evidence="1">
        <text>N(6)-[(R)-S(8)-aminomethyldihydrolipoyl]-L-lysyl-[protein] + (6S)-5,6,7,8-tetrahydrofolate = N(6)-[(R)-dihydrolipoyl]-L-lysyl-[protein] + (6R)-5,10-methylene-5,6,7,8-tetrahydrofolate + NH4(+)</text>
        <dbReference type="Rhea" id="RHEA:16945"/>
        <dbReference type="Rhea" id="RHEA-COMP:10475"/>
        <dbReference type="Rhea" id="RHEA-COMP:10492"/>
        <dbReference type="ChEBI" id="CHEBI:15636"/>
        <dbReference type="ChEBI" id="CHEBI:28938"/>
        <dbReference type="ChEBI" id="CHEBI:57453"/>
        <dbReference type="ChEBI" id="CHEBI:83100"/>
        <dbReference type="ChEBI" id="CHEBI:83143"/>
        <dbReference type="EC" id="2.1.2.10"/>
    </reaction>
</comment>
<comment type="subunit">
    <text evidence="1">The glycine cleavage system is composed of four proteins: P, T, L and H.</text>
</comment>
<comment type="similarity">
    <text evidence="1">Belongs to the GcvT family.</text>
</comment>